<name>PRIO_CERMO</name>
<comment type="function">
    <text evidence="2 4">Its primary physiological function is unclear. Has cytoprotective activity against internal or environmental stresses. May play a role in neuronal development and synaptic plasticity. May be required for neuronal myelin sheath maintenance. May play a role in iron uptake and iron homeostasis. Soluble oligomers are toxic to cultured neuroblastoma cells and induce apoptosis (in vitro). Association with GPC1 (via its heparan sulfate chains) targets PRNP to lipid rafts. Also provides Cu(2+) or Zn(2+) for the ascorbate-mediated GPC1 deaminase degradation of its heparan sulfate side chains (By similarity).</text>
</comment>
<comment type="subunit">
    <text evidence="2 4">Monomer and homodimer. Has a tendency to aggregate into amyloid fibrils containing a cross-beta spine, formed by a steric zipper of superposed beta-strands. Soluble oligomers may represent an intermediate stage on the path to fibril formation. Copper binding may promote oligomerization. Interacts with GRB2, APP, ERI3/PRNPIP and SYN1. Mislocalized cytosolically exposed PrP interacts with MGRN1; this interaction alters MGRN1 subcellular location and causes lysosomal enlargement. Interacts with KIAA1191.</text>
</comment>
<comment type="subcellular location">
    <subcellularLocation>
        <location evidence="2">Cell membrane</location>
        <topology evidence="2">Lipid-anchor</topology>
        <topology evidence="2">GPI-anchor</topology>
    </subcellularLocation>
    <subcellularLocation>
        <location evidence="4">Golgi apparatus</location>
    </subcellularLocation>
    <text evidence="2">Targeted to lipid rafts via association with the heparan sulfate chains of GPC1. Colocates, in the presence of Cu(2+), to vesicles in para- and perinuclear regions, where both proteins undergo internalization. Heparin displaces PRNP from lipid rafts and promotes endocytosis.</text>
</comment>
<comment type="domain">
    <text evidence="2">The normal, monomeric form has a mainly alpha-helical structure. The disease-associated, protease-resistant form forms amyloid fibrils containing a cross-beta spine, formed by a steric zipper of superposed beta-strands. Disease mutations may favor intermolecular contacts via short beta strands, and may thereby trigger oligomerization.</text>
</comment>
<comment type="domain">
    <text evidence="2">Contains an N-terminal region composed of octamer repeats. At low copper concentrations, the sidechains of His residues from three or four repeats contribute to the binding of a single copper ion. Alternatively, a copper ion can be bound by interaction with the sidechain and backbone amide nitrogen of a single His residue. The observed copper binding stoichiometry suggests that two repeat regions cooperate to stabilize the binding of a single copper ion. At higher copper concentrations, each octamer can bind one copper ion by interactions with the His sidechain and Gly backbone atoms. A mixture of binding types may occur, especially in the case of octamer repeat expansion. Copper binding may stabilize the conformation of this region and may promote oligomerization.</text>
</comment>
<comment type="disease">
    <text evidence="7">PrP is found in high quantity in the brain of humans and animals infected with the degenerative neurological diseases kuru, Creutzfeldt-Jakob disease (CJD), Gerstmann-Straussler syndrome (GSS), scrapie, bovine spongiform encephalopathy (BSE), transmissible mink encephalopathy (TME), etc.</text>
</comment>
<comment type="similarity">
    <text evidence="7">Belongs to the prion family.</text>
</comment>
<proteinExistence type="inferred from homology"/>
<gene>
    <name type="primary">PRNP</name>
    <name type="synonym">PRP</name>
</gene>
<dbReference type="EMBL" id="U75386">
    <property type="protein sequence ID" value="AAB50625.1"/>
    <property type="molecule type" value="Genomic_DNA"/>
</dbReference>
<dbReference type="SMR" id="P61761"/>
<dbReference type="GlyCosmos" id="P61761">
    <property type="glycosylation" value="2 sites, No reported glycans"/>
</dbReference>
<dbReference type="GO" id="GO:0005794">
    <property type="term" value="C:Golgi apparatus"/>
    <property type="evidence" value="ECO:0007669"/>
    <property type="project" value="UniProtKB-SubCell"/>
</dbReference>
<dbReference type="GO" id="GO:0005886">
    <property type="term" value="C:plasma membrane"/>
    <property type="evidence" value="ECO:0007669"/>
    <property type="project" value="UniProtKB-SubCell"/>
</dbReference>
<dbReference type="GO" id="GO:0098552">
    <property type="term" value="C:side of membrane"/>
    <property type="evidence" value="ECO:0007669"/>
    <property type="project" value="UniProtKB-KW"/>
</dbReference>
<dbReference type="GO" id="GO:0005507">
    <property type="term" value="F:copper ion binding"/>
    <property type="evidence" value="ECO:0000250"/>
    <property type="project" value="UniProtKB"/>
</dbReference>
<dbReference type="GO" id="GO:0051260">
    <property type="term" value="P:protein homooligomerization"/>
    <property type="evidence" value="ECO:0007669"/>
    <property type="project" value="InterPro"/>
</dbReference>
<dbReference type="FunFam" id="1.10.790.10:FF:000001">
    <property type="entry name" value="Major prion protein"/>
    <property type="match status" value="1"/>
</dbReference>
<dbReference type="Gene3D" id="1.10.790.10">
    <property type="entry name" value="Prion/Doppel protein, beta-ribbon domain"/>
    <property type="match status" value="1"/>
</dbReference>
<dbReference type="InterPro" id="IPR000817">
    <property type="entry name" value="Prion"/>
</dbReference>
<dbReference type="InterPro" id="IPR036924">
    <property type="entry name" value="Prion/Doppel_b-ribbon_dom_sf"/>
</dbReference>
<dbReference type="InterPro" id="IPR022416">
    <property type="entry name" value="Prion/Doppel_prot_b-ribbon_dom"/>
</dbReference>
<dbReference type="InterPro" id="IPR020949">
    <property type="entry name" value="Prion_copper_b_octapeptide"/>
</dbReference>
<dbReference type="InterPro" id="IPR025860">
    <property type="entry name" value="Prion_N"/>
</dbReference>
<dbReference type="PANTHER" id="PTHR15506">
    <property type="entry name" value="DOPPEL PRION"/>
    <property type="match status" value="1"/>
</dbReference>
<dbReference type="PANTHER" id="PTHR15506:SF2">
    <property type="entry name" value="MAJOR PRION PROTEIN"/>
    <property type="match status" value="1"/>
</dbReference>
<dbReference type="Pfam" id="PF00377">
    <property type="entry name" value="Prion"/>
    <property type="match status" value="1"/>
</dbReference>
<dbReference type="Pfam" id="PF11587">
    <property type="entry name" value="Prion_bPrPp"/>
    <property type="match status" value="1"/>
</dbReference>
<dbReference type="Pfam" id="PF03991">
    <property type="entry name" value="Prion_octapep"/>
    <property type="match status" value="1"/>
</dbReference>
<dbReference type="PRINTS" id="PR00341">
    <property type="entry name" value="PRION"/>
</dbReference>
<dbReference type="SMART" id="SM00157">
    <property type="entry name" value="PRP"/>
    <property type="match status" value="1"/>
</dbReference>
<dbReference type="SUPFAM" id="SSF54098">
    <property type="entry name" value="Prion-like"/>
    <property type="match status" value="1"/>
</dbReference>
<dbReference type="PROSITE" id="PS00291">
    <property type="entry name" value="PRION_1"/>
    <property type="match status" value="1"/>
</dbReference>
<dbReference type="PROSITE" id="PS00706">
    <property type="entry name" value="PRION_2"/>
    <property type="match status" value="1"/>
</dbReference>
<protein>
    <recommendedName>
        <fullName>Major prion protein</fullName>
        <shortName>PrP</shortName>
    </recommendedName>
    <alternativeName>
        <fullName>PrP27-30</fullName>
    </alternativeName>
    <alternativeName>
        <fullName>PrP33-35C</fullName>
    </alternativeName>
    <cdAntigenName>CD230</cdAntigenName>
</protein>
<organism>
    <name type="scientific">Cercopithecus mona</name>
    <name type="common">Mona monkey</name>
    <dbReference type="NCBI Taxonomy" id="36226"/>
    <lineage>
        <taxon>Eukaryota</taxon>
        <taxon>Metazoa</taxon>
        <taxon>Chordata</taxon>
        <taxon>Craniata</taxon>
        <taxon>Vertebrata</taxon>
        <taxon>Euteleostomi</taxon>
        <taxon>Mammalia</taxon>
        <taxon>Eutheria</taxon>
        <taxon>Euarchontoglires</taxon>
        <taxon>Primates</taxon>
        <taxon>Haplorrhini</taxon>
        <taxon>Catarrhini</taxon>
        <taxon>Cercopithecidae</taxon>
        <taxon>Cercopithecinae</taxon>
        <taxon>Cercopithecus</taxon>
    </lineage>
</organism>
<feature type="signal peptide" evidence="1">
    <location>
        <begin position="1" status="less than"/>
        <end position="15"/>
    </location>
</feature>
<feature type="chain" id="PRO_0000025657" description="Major prion protein">
    <location>
        <begin position="16"/>
        <end position="223"/>
    </location>
</feature>
<feature type="propeptide" id="PRO_0000025658" description="Removed in mature form" evidence="1">
    <location>
        <begin position="224"/>
        <end position="246"/>
    </location>
</feature>
<feature type="repeat" description="1">
    <location>
        <begin position="44"/>
        <end position="52"/>
    </location>
</feature>
<feature type="repeat" description="2">
    <location>
        <begin position="53"/>
        <end position="60"/>
    </location>
</feature>
<feature type="repeat" description="3">
    <location>
        <begin position="61"/>
        <end position="68"/>
    </location>
</feature>
<feature type="repeat" description="4">
    <location>
        <begin position="69"/>
        <end position="76"/>
    </location>
</feature>
<feature type="repeat" description="5">
    <location>
        <begin position="77"/>
        <end position="84"/>
    </location>
</feature>
<feature type="region of interest" description="Interaction with GRB2, ERI3 and SYN1" evidence="4">
    <location>
        <begin position="16"/>
        <end position="223"/>
    </location>
</feature>
<feature type="region of interest" description="Disordered" evidence="6">
    <location>
        <begin position="18"/>
        <end position="102"/>
    </location>
</feature>
<feature type="region of interest" description="5 X 8 AA tandem repeats of P-H-G-G-G-W-G-Q">
    <location>
        <begin position="44"/>
        <end position="84"/>
    </location>
</feature>
<feature type="compositionally biased region" description="Gly residues" evidence="6">
    <location>
        <begin position="45"/>
        <end position="88"/>
    </location>
</feature>
<feature type="compositionally biased region" description="Basic residues" evidence="6">
    <location>
        <begin position="91"/>
        <end position="102"/>
    </location>
</feature>
<feature type="binding site" evidence="2">
    <location>
        <position position="54"/>
    </location>
    <ligand>
        <name>Cu(2+)</name>
        <dbReference type="ChEBI" id="CHEBI:29036"/>
        <label>1</label>
    </ligand>
</feature>
<feature type="binding site" evidence="2">
    <location>
        <position position="55"/>
    </location>
    <ligand>
        <name>Cu(2+)</name>
        <dbReference type="ChEBI" id="CHEBI:29036"/>
        <label>1</label>
    </ligand>
</feature>
<feature type="binding site" evidence="2">
    <location>
        <position position="56"/>
    </location>
    <ligand>
        <name>Cu(2+)</name>
        <dbReference type="ChEBI" id="CHEBI:29036"/>
        <label>1</label>
    </ligand>
</feature>
<feature type="binding site" evidence="2">
    <location>
        <position position="62"/>
    </location>
    <ligand>
        <name>Cu(2+)</name>
        <dbReference type="ChEBI" id="CHEBI:29036"/>
        <label>2</label>
    </ligand>
</feature>
<feature type="binding site" evidence="2">
    <location>
        <position position="63"/>
    </location>
    <ligand>
        <name>Cu(2+)</name>
        <dbReference type="ChEBI" id="CHEBI:29036"/>
        <label>2</label>
    </ligand>
</feature>
<feature type="binding site" evidence="2">
    <location>
        <position position="64"/>
    </location>
    <ligand>
        <name>Cu(2+)</name>
        <dbReference type="ChEBI" id="CHEBI:29036"/>
        <label>2</label>
    </ligand>
</feature>
<feature type="binding site" evidence="2">
    <location>
        <position position="70"/>
    </location>
    <ligand>
        <name>Cu(2+)</name>
        <dbReference type="ChEBI" id="CHEBI:29036"/>
        <label>3</label>
    </ligand>
</feature>
<feature type="binding site" evidence="2">
    <location>
        <position position="71"/>
    </location>
    <ligand>
        <name>Cu(2+)</name>
        <dbReference type="ChEBI" id="CHEBI:29036"/>
        <label>3</label>
    </ligand>
</feature>
<feature type="binding site" evidence="2">
    <location>
        <position position="72"/>
    </location>
    <ligand>
        <name>Cu(2+)</name>
        <dbReference type="ChEBI" id="CHEBI:29036"/>
        <label>3</label>
    </ligand>
</feature>
<feature type="binding site" evidence="2">
    <location>
        <position position="78"/>
    </location>
    <ligand>
        <name>Cu(2+)</name>
        <dbReference type="ChEBI" id="CHEBI:29036"/>
        <label>4</label>
    </ligand>
</feature>
<feature type="binding site" evidence="2">
    <location>
        <position position="79"/>
    </location>
    <ligand>
        <name>Cu(2+)</name>
        <dbReference type="ChEBI" id="CHEBI:29036"/>
        <label>4</label>
    </ligand>
</feature>
<feature type="binding site" evidence="2">
    <location>
        <position position="80"/>
    </location>
    <ligand>
        <name>Cu(2+)</name>
        <dbReference type="ChEBI" id="CHEBI:29036"/>
        <label>4</label>
    </ligand>
</feature>
<feature type="lipid moiety-binding region" description="GPI-anchor amidated serine" evidence="3">
    <location>
        <position position="223"/>
    </location>
</feature>
<feature type="glycosylation site" description="N-linked (GlcNAc...) asparagine" evidence="5">
    <location>
        <position position="174"/>
    </location>
</feature>
<feature type="glycosylation site" description="N-linked (GlcNAc...) asparagine" evidence="5">
    <location>
        <position position="190"/>
    </location>
</feature>
<feature type="disulfide bond" evidence="3">
    <location>
        <begin position="172"/>
        <end position="207"/>
    </location>
</feature>
<feature type="non-terminal residue">
    <location>
        <position position="1"/>
    </location>
</feature>
<accession>P61761</accession>
<accession>Q95172</accession>
<accession>Q95173</accession>
<reference key="1">
    <citation type="submission" date="1996-11" db="EMBL/GenBank/DDBJ databases">
        <title>Evidence for an increased substitution rate of the hominoid prion protein gene during the period of brain expansion.</title>
        <authorList>
            <person name="van der Kuyl A.C."/>
            <person name="Dekker J.T."/>
            <person name="Goudsmit J."/>
        </authorList>
    </citation>
    <scope>NUCLEOTIDE SEQUENCE [GENOMIC DNA]</scope>
</reference>
<keyword id="KW-0034">Amyloid</keyword>
<keyword id="KW-1003">Cell membrane</keyword>
<keyword id="KW-0186">Copper</keyword>
<keyword id="KW-1015">Disulfide bond</keyword>
<keyword id="KW-0325">Glycoprotein</keyword>
<keyword id="KW-0333">Golgi apparatus</keyword>
<keyword id="KW-0336">GPI-anchor</keyword>
<keyword id="KW-0449">Lipoprotein</keyword>
<keyword id="KW-0472">Membrane</keyword>
<keyword id="KW-0479">Metal-binding</keyword>
<keyword id="KW-0640">Prion</keyword>
<keyword id="KW-0677">Repeat</keyword>
<keyword id="KW-0732">Signal</keyword>
<keyword id="KW-0862">Zinc</keyword>
<sequence>MLVLFVATWSDLGLCKKRPKPGGWNTGGSRYPGQGSPGGNRYPPQGGGGWGQPHGGGWGQPHGGGWGQPHGGGWGQPHGGGWGQGGGTHNQWHKPSKPKTSMKHMAGAAAAGAVVGGLGGYMLGSAMSRPLIHFGNDYEDRYYRENMYRYPNQVYYRPVDQYSNQNNFVHDCVNITIKQHTVTTTTKGENFTETDVKMMERVVEQMCITQYEKESQAYYQRGSSMVLFSSPPVILLISFLIFLIVG</sequence>
<evidence type="ECO:0000250" key="1"/>
<evidence type="ECO:0000250" key="2">
    <source>
        <dbReference type="UniProtKB" id="P04156"/>
    </source>
</evidence>
<evidence type="ECO:0000250" key="3">
    <source>
        <dbReference type="UniProtKB" id="P04273"/>
    </source>
</evidence>
<evidence type="ECO:0000250" key="4">
    <source>
        <dbReference type="UniProtKB" id="P04925"/>
    </source>
</evidence>
<evidence type="ECO:0000255" key="5"/>
<evidence type="ECO:0000256" key="6">
    <source>
        <dbReference type="SAM" id="MobiDB-lite"/>
    </source>
</evidence>
<evidence type="ECO:0000305" key="7"/>